<proteinExistence type="inferred from homology"/>
<organismHost>
    <name type="scientific">Bacillus subtilis</name>
    <dbReference type="NCBI Taxonomy" id="1423"/>
</organismHost>
<organism>
    <name type="scientific">Bacillus phage B103</name>
    <name type="common">Bacteriophage B103</name>
    <dbReference type="NCBI Taxonomy" id="2994042"/>
    <lineage>
        <taxon>Viruses</taxon>
        <taxon>Duplodnaviria</taxon>
        <taxon>Heunggongvirae</taxon>
        <taxon>Uroviricota</taxon>
        <taxon>Caudoviricetes</taxon>
        <taxon>Salasmaviridae</taxon>
        <taxon>Picovirinae</taxon>
        <taxon>Beecentumtrevirus</taxon>
        <taxon>Beecentumtrevirus B103</taxon>
    </lineage>
</organism>
<protein>
    <recommendedName>
        <fullName evidence="1">Major capsid protein</fullName>
    </recommendedName>
    <alternativeName>
        <fullName evidence="1">Gene product 8</fullName>
        <shortName evidence="1">gp8</shortName>
    </alternativeName>
    <alternativeName>
        <fullName evidence="3">Major head protein</fullName>
    </alternativeName>
    <alternativeName>
        <fullName evidence="1">Protein p8</fullName>
    </alternativeName>
</protein>
<comment type="function">
    <text evidence="1">Assembles to form a prolate capsid shell of about 54 nm in length and 45 nm in width, with a T=3, Q=5 symmetry.</text>
</comment>
<comment type="subunit">
    <text evidence="1">Homohexamer. Homopentamer. The prolate capsid is composed of pentamers and hexamers of the capsid protein.</text>
</comment>
<comment type="subcellular location">
    <subcellularLocation>
        <location evidence="1">Virion</location>
    </subcellularLocation>
    <text evidence="1">Present in about 235 copies in the virion.</text>
</comment>
<comment type="similarity">
    <text evidence="3">Belongs to the phi29likevirus major capsid protein family.</text>
</comment>
<accession>Q37888</accession>
<keyword id="KW-0167">Capsid protein</keyword>
<keyword id="KW-0426">Late protein</keyword>
<keyword id="KW-1142">T=3 icosahedral capsid protein</keyword>
<keyword id="KW-0946">Virion</keyword>
<reference key="1">
    <citation type="journal article" date="1997" name="Gene">
        <title>Bacteriophage B103: complete DNA sequence of its genome and relationship to other Bacillus phages.</title>
        <authorList>
            <person name="Pecenkova T."/>
            <person name="Benes V."/>
            <person name="Paces J."/>
            <person name="Vlcek C."/>
            <person name="Paces V."/>
        </authorList>
    </citation>
    <scope>NUCLEOTIDE SEQUENCE [LARGE SCALE GENOMIC DNA]</scope>
</reference>
<sequence length="449" mass="49700">MRVTFNDVKTSLGVTESYDIINAIRNSATDNFKTYVPLANAENVAEVGAGILVNQTVQNEFLTSLVDRIGLVIVKSISLRNPLAKFKKGALPMGRTIEEIFTDITKEKLYDAEEAEQKVFEREIPNVKTLFHERNRQSFYHQTIQDDSLKTAFISWGNFESFIASIINAIYNSAEVDEYEYMKLIIDNYYSKGLFKVVKVDDPMTSTGALTNFIKKARATALKMTLPQGTRDYNAMAVRTRSDIRDVHLFIDADLNAELDVDVLAKAFNMDRTTFLGNVTVIDGFASTGLKAVMVDKDWFMVYDTLQKMETIRNPRGLYWNYYYHVWQVLSASRFANAVAFVTGDDVPAVTQVIVSPAIASVKQGKSQAFTAYVRATDDKEHEVVWSVDGGSTGTSISSDGVLTVAANETNQLTVKATVDIGTADEPKPVVGEAVVNVRPDSSTGGAQA</sequence>
<dbReference type="EMBL" id="X99260">
    <property type="protein sequence ID" value="CAA67655.1"/>
    <property type="molecule type" value="Genomic_DNA"/>
</dbReference>
<dbReference type="RefSeq" id="NP_690641.1">
    <property type="nucleotide sequence ID" value="NC_004165.1"/>
</dbReference>
<dbReference type="SMR" id="Q37888"/>
<dbReference type="KEGG" id="vg:955370"/>
<dbReference type="Proteomes" id="UP000000971">
    <property type="component" value="Segment"/>
</dbReference>
<dbReference type="GO" id="GO:0039617">
    <property type="term" value="C:T=3 icosahedral viral capsid"/>
    <property type="evidence" value="ECO:0007669"/>
    <property type="project" value="UniProtKB-KW"/>
</dbReference>
<dbReference type="InterPro" id="IPR003343">
    <property type="entry name" value="Big_2"/>
</dbReference>
<dbReference type="Pfam" id="PF02368">
    <property type="entry name" value="Big_2"/>
    <property type="match status" value="1"/>
</dbReference>
<dbReference type="SMART" id="SM00635">
    <property type="entry name" value="BID_2"/>
    <property type="match status" value="1"/>
</dbReference>
<feature type="chain" id="PRO_0000106573" description="Major capsid protein">
    <location>
        <begin position="1"/>
        <end position="449"/>
    </location>
</feature>
<feature type="domain" description="BIG2" evidence="2">
    <location>
        <begin position="349"/>
        <end position="427"/>
    </location>
</feature>
<gene>
    <name type="primary">8</name>
</gene>
<name>CAPSD_BPB03</name>
<evidence type="ECO:0000250" key="1">
    <source>
        <dbReference type="UniProtKB" id="P13849"/>
    </source>
</evidence>
<evidence type="ECO:0000255" key="2"/>
<evidence type="ECO:0000305" key="3"/>